<evidence type="ECO:0000255" key="1">
    <source>
        <dbReference type="HAMAP-Rule" id="MF_01396"/>
    </source>
</evidence>
<sequence>MGVLAAAIAIGLAALGAGIGNGLIVSRTVEGIARQPEARGMLQTTMFIGVALVEAIPIIAVVIAFMVQGR</sequence>
<gene>
    <name evidence="1" type="primary">atpE</name>
    <name type="ordered locus">GWCH70_3308</name>
</gene>
<reference key="1">
    <citation type="submission" date="2009-06" db="EMBL/GenBank/DDBJ databases">
        <title>Complete sequence of chromosome of Geopacillus sp. WCH70.</title>
        <authorList>
            <consortium name="US DOE Joint Genome Institute"/>
            <person name="Lucas S."/>
            <person name="Copeland A."/>
            <person name="Lapidus A."/>
            <person name="Glavina del Rio T."/>
            <person name="Dalin E."/>
            <person name="Tice H."/>
            <person name="Bruce D."/>
            <person name="Goodwin L."/>
            <person name="Pitluck S."/>
            <person name="Chertkov O."/>
            <person name="Brettin T."/>
            <person name="Detter J.C."/>
            <person name="Han C."/>
            <person name="Larimer F."/>
            <person name="Land M."/>
            <person name="Hauser L."/>
            <person name="Kyrpides N."/>
            <person name="Mikhailova N."/>
            <person name="Brumm P."/>
            <person name="Mead D.A."/>
            <person name="Richardson P."/>
        </authorList>
    </citation>
    <scope>NUCLEOTIDE SEQUENCE [LARGE SCALE GENOMIC DNA]</scope>
    <source>
        <strain>WCH70</strain>
    </source>
</reference>
<accession>C5D995</accession>
<organism>
    <name type="scientific">Geobacillus sp. (strain WCH70)</name>
    <dbReference type="NCBI Taxonomy" id="471223"/>
    <lineage>
        <taxon>Bacteria</taxon>
        <taxon>Bacillati</taxon>
        <taxon>Bacillota</taxon>
        <taxon>Bacilli</taxon>
        <taxon>Bacillales</taxon>
        <taxon>Anoxybacillaceae</taxon>
        <taxon>Geobacillus</taxon>
    </lineage>
</organism>
<feature type="chain" id="PRO_1000215161" description="ATP synthase subunit c">
    <location>
        <begin position="1"/>
        <end position="70"/>
    </location>
</feature>
<feature type="transmembrane region" description="Helical" evidence="1">
    <location>
        <begin position="5"/>
        <end position="25"/>
    </location>
</feature>
<feature type="transmembrane region" description="Helical" evidence="1">
    <location>
        <begin position="47"/>
        <end position="67"/>
    </location>
</feature>
<feature type="site" description="Reversibly protonated during proton transport" evidence="1">
    <location>
        <position position="54"/>
    </location>
</feature>
<dbReference type="EMBL" id="CP001638">
    <property type="protein sequence ID" value="ACS25948.1"/>
    <property type="molecule type" value="Genomic_DNA"/>
</dbReference>
<dbReference type="SMR" id="C5D995"/>
<dbReference type="STRING" id="471223.GWCH70_3308"/>
<dbReference type="KEGG" id="gwc:GWCH70_3308"/>
<dbReference type="eggNOG" id="COG0636">
    <property type="taxonomic scope" value="Bacteria"/>
</dbReference>
<dbReference type="HOGENOM" id="CLU_148047_1_1_9"/>
<dbReference type="GO" id="GO:0005886">
    <property type="term" value="C:plasma membrane"/>
    <property type="evidence" value="ECO:0007669"/>
    <property type="project" value="UniProtKB-SubCell"/>
</dbReference>
<dbReference type="GO" id="GO:0045259">
    <property type="term" value="C:proton-transporting ATP synthase complex"/>
    <property type="evidence" value="ECO:0007669"/>
    <property type="project" value="UniProtKB-KW"/>
</dbReference>
<dbReference type="GO" id="GO:0033177">
    <property type="term" value="C:proton-transporting two-sector ATPase complex, proton-transporting domain"/>
    <property type="evidence" value="ECO:0007669"/>
    <property type="project" value="InterPro"/>
</dbReference>
<dbReference type="GO" id="GO:0008289">
    <property type="term" value="F:lipid binding"/>
    <property type="evidence" value="ECO:0007669"/>
    <property type="project" value="UniProtKB-KW"/>
</dbReference>
<dbReference type="GO" id="GO:0046933">
    <property type="term" value="F:proton-transporting ATP synthase activity, rotational mechanism"/>
    <property type="evidence" value="ECO:0007669"/>
    <property type="project" value="UniProtKB-UniRule"/>
</dbReference>
<dbReference type="CDD" id="cd18185">
    <property type="entry name" value="ATP-synt_Fo_c_ATPE"/>
    <property type="match status" value="1"/>
</dbReference>
<dbReference type="FunFam" id="1.20.20.10:FF:000004">
    <property type="entry name" value="ATP synthase subunit c"/>
    <property type="match status" value="1"/>
</dbReference>
<dbReference type="Gene3D" id="1.20.20.10">
    <property type="entry name" value="F1F0 ATP synthase subunit C"/>
    <property type="match status" value="1"/>
</dbReference>
<dbReference type="HAMAP" id="MF_01396">
    <property type="entry name" value="ATP_synth_c_bact"/>
    <property type="match status" value="1"/>
</dbReference>
<dbReference type="InterPro" id="IPR005953">
    <property type="entry name" value="ATP_synth_csu_bac/chlpt"/>
</dbReference>
<dbReference type="InterPro" id="IPR000454">
    <property type="entry name" value="ATP_synth_F0_csu"/>
</dbReference>
<dbReference type="InterPro" id="IPR020537">
    <property type="entry name" value="ATP_synth_F0_csu_DDCD_BS"/>
</dbReference>
<dbReference type="InterPro" id="IPR038662">
    <property type="entry name" value="ATP_synth_F0_csu_sf"/>
</dbReference>
<dbReference type="InterPro" id="IPR002379">
    <property type="entry name" value="ATPase_proteolipid_c-like_dom"/>
</dbReference>
<dbReference type="InterPro" id="IPR035921">
    <property type="entry name" value="F/V-ATP_Csub_sf"/>
</dbReference>
<dbReference type="NCBIfam" id="TIGR01260">
    <property type="entry name" value="ATP_synt_c"/>
    <property type="match status" value="1"/>
</dbReference>
<dbReference type="NCBIfam" id="NF005363">
    <property type="entry name" value="PRK06876.1"/>
    <property type="match status" value="1"/>
</dbReference>
<dbReference type="PANTHER" id="PTHR10031">
    <property type="entry name" value="ATP SYNTHASE LIPID-BINDING PROTEIN, MITOCHONDRIAL"/>
    <property type="match status" value="1"/>
</dbReference>
<dbReference type="PANTHER" id="PTHR10031:SF0">
    <property type="entry name" value="ATPASE PROTEIN 9"/>
    <property type="match status" value="1"/>
</dbReference>
<dbReference type="Pfam" id="PF00137">
    <property type="entry name" value="ATP-synt_C"/>
    <property type="match status" value="1"/>
</dbReference>
<dbReference type="PRINTS" id="PR00124">
    <property type="entry name" value="ATPASEC"/>
</dbReference>
<dbReference type="SUPFAM" id="SSF81333">
    <property type="entry name" value="F1F0 ATP synthase subunit C"/>
    <property type="match status" value="1"/>
</dbReference>
<dbReference type="PROSITE" id="PS00605">
    <property type="entry name" value="ATPASE_C"/>
    <property type="match status" value="1"/>
</dbReference>
<name>ATPL_GEOSW</name>
<comment type="function">
    <text evidence="1">F(1)F(0) ATP synthase produces ATP from ADP in the presence of a proton or sodium gradient. F-type ATPases consist of two structural domains, F(1) containing the extramembraneous catalytic core and F(0) containing the membrane proton channel, linked together by a central stalk and a peripheral stalk. During catalysis, ATP synthesis in the catalytic domain of F(1) is coupled via a rotary mechanism of the central stalk subunits to proton translocation.</text>
</comment>
<comment type="function">
    <text evidence="1">Key component of the F(0) channel; it plays a direct role in translocation across the membrane. A homomeric c-ring of between 10-14 subunits forms the central stalk rotor element with the F(1) delta and epsilon subunits.</text>
</comment>
<comment type="subunit">
    <text evidence="1">F-type ATPases have 2 components, F(1) - the catalytic core - and F(0) - the membrane proton channel. F(1) has five subunits: alpha(3), beta(3), gamma(1), delta(1), epsilon(1). F(0) has three main subunits: a(1), b(2) and c(10-14). The alpha and beta chains form an alternating ring which encloses part of the gamma chain. F(1) is attached to F(0) by a central stalk formed by the gamma and epsilon chains, while a peripheral stalk is formed by the delta and b chains.</text>
</comment>
<comment type="subcellular location">
    <subcellularLocation>
        <location evidence="1">Cell membrane</location>
        <topology evidence="1">Multi-pass membrane protein</topology>
    </subcellularLocation>
</comment>
<comment type="similarity">
    <text evidence="1">Belongs to the ATPase C chain family.</text>
</comment>
<keyword id="KW-0066">ATP synthesis</keyword>
<keyword id="KW-1003">Cell membrane</keyword>
<keyword id="KW-0138">CF(0)</keyword>
<keyword id="KW-0375">Hydrogen ion transport</keyword>
<keyword id="KW-0406">Ion transport</keyword>
<keyword id="KW-0446">Lipid-binding</keyword>
<keyword id="KW-0472">Membrane</keyword>
<keyword id="KW-0812">Transmembrane</keyword>
<keyword id="KW-1133">Transmembrane helix</keyword>
<keyword id="KW-0813">Transport</keyword>
<proteinExistence type="inferred from homology"/>
<protein>
    <recommendedName>
        <fullName evidence="1">ATP synthase subunit c</fullName>
    </recommendedName>
    <alternativeName>
        <fullName evidence="1">ATP synthase F(0) sector subunit c</fullName>
    </alternativeName>
    <alternativeName>
        <fullName evidence="1">F-type ATPase subunit c</fullName>
        <shortName evidence="1">F-ATPase subunit c</shortName>
    </alternativeName>
    <alternativeName>
        <fullName evidence="1">Lipid-binding protein</fullName>
    </alternativeName>
</protein>